<protein>
    <recommendedName>
        <fullName>Antitoxin MazE</fullName>
    </recommendedName>
</protein>
<reference key="1">
    <citation type="journal article" date="2004" name="Proc. Natl. Acad. Sci. U.S.A.">
        <title>Complete genomes of two clinical Staphylococcus aureus strains: evidence for the rapid evolution of virulence and drug resistance.</title>
        <authorList>
            <person name="Holden M.T.G."/>
            <person name="Feil E.J."/>
            <person name="Lindsay J.A."/>
            <person name="Peacock S.J."/>
            <person name="Day N.P.J."/>
            <person name="Enright M.C."/>
            <person name="Foster T.J."/>
            <person name="Moore C.E."/>
            <person name="Hurst L."/>
            <person name="Atkin R."/>
            <person name="Barron A."/>
            <person name="Bason N."/>
            <person name="Bentley S.D."/>
            <person name="Chillingworth C."/>
            <person name="Chillingworth T."/>
            <person name="Churcher C."/>
            <person name="Clark L."/>
            <person name="Corton C."/>
            <person name="Cronin A."/>
            <person name="Doggett J."/>
            <person name="Dowd L."/>
            <person name="Feltwell T."/>
            <person name="Hance Z."/>
            <person name="Harris B."/>
            <person name="Hauser H."/>
            <person name="Holroyd S."/>
            <person name="Jagels K."/>
            <person name="James K.D."/>
            <person name="Lennard N."/>
            <person name="Line A."/>
            <person name="Mayes R."/>
            <person name="Moule S."/>
            <person name="Mungall K."/>
            <person name="Ormond D."/>
            <person name="Quail M.A."/>
            <person name="Rabbinowitsch E."/>
            <person name="Rutherford K.M."/>
            <person name="Sanders M."/>
            <person name="Sharp S."/>
            <person name="Simmonds M."/>
            <person name="Stevens K."/>
            <person name="Whitehead S."/>
            <person name="Barrell B.G."/>
            <person name="Spratt B.G."/>
            <person name="Parkhill J."/>
        </authorList>
    </citation>
    <scope>NUCLEOTIDE SEQUENCE [LARGE SCALE GENOMIC DNA]</scope>
    <source>
        <strain>MSSA476</strain>
    </source>
</reference>
<comment type="function">
    <text evidence="1">Antitoxin component of a type II toxin-antitoxin (TA) system. Labile antitoxin that binds to cognate MazF toxin and counteracts its endoribonuclease activity.</text>
</comment>
<comment type="subunit">
    <text evidence="1">Forms a complex with cognate toxin MazF which inhibits the endoribonuclease activity of MazF.</text>
</comment>
<comment type="similarity">
    <text evidence="2">Belongs to the MazE/EndoAI family.</text>
</comment>
<keyword id="KW-1277">Toxin-antitoxin system</keyword>
<feature type="chain" id="PRO_0000330713" description="Antitoxin MazE">
    <location>
        <begin position="1"/>
        <end position="56"/>
    </location>
</feature>
<sequence>MLSFSQNRSHSLEQSLKEGYSQMADLNLSLANEAFPIECEACDCNETYLSSNSTNE</sequence>
<gene>
    <name type="primary">mazE</name>
    <name type="ordered locus">SAS1974</name>
</gene>
<proteinExistence type="inferred from homology"/>
<name>MAZE_STAAS</name>
<accession>Q6G7P0</accession>
<evidence type="ECO:0000250" key="1">
    <source>
        <dbReference type="UniProtKB" id="P0C7B4"/>
    </source>
</evidence>
<evidence type="ECO:0000305" key="2"/>
<dbReference type="EMBL" id="BX571857">
    <property type="protein sequence ID" value="CAG43781.1"/>
    <property type="molecule type" value="Genomic_DNA"/>
</dbReference>
<dbReference type="RefSeq" id="WP_000948331.1">
    <property type="nucleotide sequence ID" value="NC_002953.3"/>
</dbReference>
<dbReference type="SMR" id="Q6G7P0"/>
<dbReference type="GeneID" id="98346377"/>
<dbReference type="KEGG" id="sas:SAS1974"/>
<dbReference type="HOGENOM" id="CLU_3012108_0_0_9"/>
<dbReference type="GO" id="GO:0006355">
    <property type="term" value="P:regulation of DNA-templated transcription"/>
    <property type="evidence" value="ECO:0007669"/>
    <property type="project" value="InterPro"/>
</dbReference>
<dbReference type="Gene3D" id="1.10.1220.10">
    <property type="entry name" value="Met repressor-like"/>
    <property type="match status" value="1"/>
</dbReference>
<dbReference type="InterPro" id="IPR013321">
    <property type="entry name" value="Arc_rbn_hlx_hlx"/>
</dbReference>
<dbReference type="InterPro" id="IPR048242">
    <property type="entry name" value="MazE"/>
</dbReference>
<dbReference type="NCBIfam" id="NF041459">
    <property type="entry name" value="antitoxMazE_Staph"/>
    <property type="match status" value="1"/>
</dbReference>
<organism>
    <name type="scientific">Staphylococcus aureus (strain MSSA476)</name>
    <dbReference type="NCBI Taxonomy" id="282459"/>
    <lineage>
        <taxon>Bacteria</taxon>
        <taxon>Bacillati</taxon>
        <taxon>Bacillota</taxon>
        <taxon>Bacilli</taxon>
        <taxon>Bacillales</taxon>
        <taxon>Staphylococcaceae</taxon>
        <taxon>Staphylococcus</taxon>
    </lineage>
</organism>